<reference key="1">
    <citation type="journal article" date="2004" name="Proc. Natl. Acad. Sci. U.S.A.">
        <title>Genome sequence of the deep-sea gamma-proteobacterium Idiomarina loihiensis reveals amino acid fermentation as a source of carbon and energy.</title>
        <authorList>
            <person name="Hou S."/>
            <person name="Saw J.H."/>
            <person name="Lee K.S."/>
            <person name="Freitas T.A."/>
            <person name="Belisle C."/>
            <person name="Kawarabayasi Y."/>
            <person name="Donachie S.P."/>
            <person name="Pikina A."/>
            <person name="Galperin M.Y."/>
            <person name="Koonin E.V."/>
            <person name="Makarova K.S."/>
            <person name="Omelchenko M.V."/>
            <person name="Sorokin A."/>
            <person name="Wolf Y.I."/>
            <person name="Li Q.X."/>
            <person name="Keum Y.S."/>
            <person name="Campbell S."/>
            <person name="Denery J."/>
            <person name="Aizawa S."/>
            <person name="Shibata S."/>
            <person name="Malahoff A."/>
            <person name="Alam M."/>
        </authorList>
    </citation>
    <scope>NUCLEOTIDE SEQUENCE [LARGE SCALE GENOMIC DNA]</scope>
    <source>
        <strain>ATCC BAA-735 / DSM 15497 / L2-TR</strain>
    </source>
</reference>
<protein>
    <recommendedName>
        <fullName evidence="1">Ribosomal RNA large subunit methyltransferase M</fullName>
        <ecNumber evidence="1">2.1.1.186</ecNumber>
    </recommendedName>
    <alternativeName>
        <fullName evidence="1">23S rRNA (cytidine2498-2'-O)-methyltransferase</fullName>
    </alternativeName>
    <alternativeName>
        <fullName evidence="1">23S rRNA 2'-O-ribose methyltransferase RlmM</fullName>
    </alternativeName>
</protein>
<accession>Q5QW15</accession>
<organism>
    <name type="scientific">Idiomarina loihiensis (strain ATCC BAA-735 / DSM 15497 / L2-TR)</name>
    <dbReference type="NCBI Taxonomy" id="283942"/>
    <lineage>
        <taxon>Bacteria</taxon>
        <taxon>Pseudomonadati</taxon>
        <taxon>Pseudomonadota</taxon>
        <taxon>Gammaproteobacteria</taxon>
        <taxon>Alteromonadales</taxon>
        <taxon>Idiomarinaceae</taxon>
        <taxon>Idiomarina</taxon>
    </lineage>
</organism>
<sequence length="369" mass="41788">MSEIVNGRGSGIVLLCRAGFEGDCAAEIQDKTAELGVYGYCQTQPEQAYVTYHCQHEEAEHIARKLTLKDLVFAREMFALLGPVKVAGIEDRASEVIKVLKPHQETFGLAGELRVGTPDTNEANQLSKFCRKFSVPLRQALRKEELLSNKPLAKRPMLHVLFVNPAHALVGYSYSYNQTLHNGGIVRLRMSKEAPSRSTLKLDEAFQVFVPENEHEKRVHSGMKAVDLGAAPGGWTYQLVRRGMMVQAVDNGPMAESLMETGQVKHIQEDGFKFRPKRKNVTWLVCDMVEKPARVGELMTSWLLEGDCEEAIFNLKLPMRQRYAAVKGYLDQIKEQLQTEGTKPFEIQAKHLYHDREEITVHLRWLPRS</sequence>
<gene>
    <name evidence="1" type="primary">rlmM</name>
    <name type="ordered locus">IL0862</name>
</gene>
<keyword id="KW-0963">Cytoplasm</keyword>
<keyword id="KW-0489">Methyltransferase</keyword>
<keyword id="KW-1185">Reference proteome</keyword>
<keyword id="KW-0698">rRNA processing</keyword>
<keyword id="KW-0949">S-adenosyl-L-methionine</keyword>
<keyword id="KW-0808">Transferase</keyword>
<evidence type="ECO:0000255" key="1">
    <source>
        <dbReference type="HAMAP-Rule" id="MF_01551"/>
    </source>
</evidence>
<comment type="function">
    <text evidence="1">Catalyzes the 2'-O-methylation at nucleotide C2498 in 23S rRNA.</text>
</comment>
<comment type="catalytic activity">
    <reaction evidence="1">
        <text>cytidine(2498) in 23S rRNA + S-adenosyl-L-methionine = 2'-O-methylcytidine(2498) in 23S rRNA + S-adenosyl-L-homocysteine + H(+)</text>
        <dbReference type="Rhea" id="RHEA:42788"/>
        <dbReference type="Rhea" id="RHEA-COMP:10244"/>
        <dbReference type="Rhea" id="RHEA-COMP:10245"/>
        <dbReference type="ChEBI" id="CHEBI:15378"/>
        <dbReference type="ChEBI" id="CHEBI:57856"/>
        <dbReference type="ChEBI" id="CHEBI:59789"/>
        <dbReference type="ChEBI" id="CHEBI:74495"/>
        <dbReference type="ChEBI" id="CHEBI:82748"/>
        <dbReference type="EC" id="2.1.1.186"/>
    </reaction>
</comment>
<comment type="subunit">
    <text evidence="1">Monomer.</text>
</comment>
<comment type="subcellular location">
    <subcellularLocation>
        <location evidence="1">Cytoplasm</location>
    </subcellularLocation>
</comment>
<comment type="similarity">
    <text evidence="1">Belongs to the class I-like SAM-binding methyltransferase superfamily. RNA methyltransferase RlmE family. RlmM subfamily.</text>
</comment>
<name>RLMM_IDILO</name>
<feature type="chain" id="PRO_0000070408" description="Ribosomal RNA large subunit methyltransferase M">
    <location>
        <begin position="1"/>
        <end position="369"/>
    </location>
</feature>
<feature type="active site" description="Proton acceptor" evidence="1">
    <location>
        <position position="316"/>
    </location>
</feature>
<feature type="binding site" evidence="1">
    <location>
        <position position="198"/>
    </location>
    <ligand>
        <name>S-adenosyl-L-methionine</name>
        <dbReference type="ChEBI" id="CHEBI:59789"/>
    </ligand>
</feature>
<feature type="binding site" evidence="1">
    <location>
        <begin position="231"/>
        <end position="234"/>
    </location>
    <ligand>
        <name>S-adenosyl-L-methionine</name>
        <dbReference type="ChEBI" id="CHEBI:59789"/>
    </ligand>
</feature>
<feature type="binding site" evidence="1">
    <location>
        <position position="250"/>
    </location>
    <ligand>
        <name>S-adenosyl-L-methionine</name>
        <dbReference type="ChEBI" id="CHEBI:59789"/>
    </ligand>
</feature>
<feature type="binding site" evidence="1">
    <location>
        <position position="270"/>
    </location>
    <ligand>
        <name>S-adenosyl-L-methionine</name>
        <dbReference type="ChEBI" id="CHEBI:59789"/>
    </ligand>
</feature>
<feature type="binding site" evidence="1">
    <location>
        <position position="287"/>
    </location>
    <ligand>
        <name>S-adenosyl-L-methionine</name>
        <dbReference type="ChEBI" id="CHEBI:59789"/>
    </ligand>
</feature>
<proteinExistence type="inferred from homology"/>
<dbReference type="EC" id="2.1.1.186" evidence="1"/>
<dbReference type="EMBL" id="AE017340">
    <property type="protein sequence ID" value="AAV81702.1"/>
    <property type="molecule type" value="Genomic_DNA"/>
</dbReference>
<dbReference type="RefSeq" id="WP_011234113.1">
    <property type="nucleotide sequence ID" value="NC_006512.1"/>
</dbReference>
<dbReference type="SMR" id="Q5QW15"/>
<dbReference type="STRING" id="283942.IL0862"/>
<dbReference type="GeneID" id="41336018"/>
<dbReference type="KEGG" id="ilo:IL0862"/>
<dbReference type="eggNOG" id="COG2933">
    <property type="taxonomic scope" value="Bacteria"/>
</dbReference>
<dbReference type="HOGENOM" id="CLU_043780_0_0_6"/>
<dbReference type="OrthoDB" id="154490at2"/>
<dbReference type="Proteomes" id="UP000001171">
    <property type="component" value="Chromosome"/>
</dbReference>
<dbReference type="GO" id="GO:0005737">
    <property type="term" value="C:cytoplasm"/>
    <property type="evidence" value="ECO:0007669"/>
    <property type="project" value="UniProtKB-SubCell"/>
</dbReference>
<dbReference type="GO" id="GO:0008757">
    <property type="term" value="F:S-adenosylmethionine-dependent methyltransferase activity"/>
    <property type="evidence" value="ECO:0007669"/>
    <property type="project" value="UniProtKB-UniRule"/>
</dbReference>
<dbReference type="GO" id="GO:0032259">
    <property type="term" value="P:methylation"/>
    <property type="evidence" value="ECO:0007669"/>
    <property type="project" value="UniProtKB-KW"/>
</dbReference>
<dbReference type="GO" id="GO:0006364">
    <property type="term" value="P:rRNA processing"/>
    <property type="evidence" value="ECO:0007669"/>
    <property type="project" value="UniProtKB-UniRule"/>
</dbReference>
<dbReference type="Gene3D" id="3.30.2300.20">
    <property type="match status" value="1"/>
</dbReference>
<dbReference type="Gene3D" id="3.30.70.2810">
    <property type="match status" value="1"/>
</dbReference>
<dbReference type="Gene3D" id="3.40.50.150">
    <property type="entry name" value="Vaccinia Virus protein VP39"/>
    <property type="match status" value="1"/>
</dbReference>
<dbReference type="HAMAP" id="MF_01551">
    <property type="entry name" value="23SrRNA_methyltr_M"/>
    <property type="match status" value="1"/>
</dbReference>
<dbReference type="InterPro" id="IPR040739">
    <property type="entry name" value="RlmM_FDX"/>
</dbReference>
<dbReference type="InterPro" id="IPR048646">
    <property type="entry name" value="RlmM_THUMP-like"/>
</dbReference>
<dbReference type="InterPro" id="IPR002877">
    <property type="entry name" value="RNA_MeTrfase_FtsJ_dom"/>
</dbReference>
<dbReference type="InterPro" id="IPR011224">
    <property type="entry name" value="rRNA_MeTrfase_M"/>
</dbReference>
<dbReference type="InterPro" id="IPR029063">
    <property type="entry name" value="SAM-dependent_MTases_sf"/>
</dbReference>
<dbReference type="NCBIfam" id="NF008734">
    <property type="entry name" value="PRK11760.1"/>
    <property type="match status" value="1"/>
</dbReference>
<dbReference type="PANTHER" id="PTHR37524">
    <property type="entry name" value="RIBOSOMAL RNA LARGE SUBUNIT METHYLTRANSFERASE M"/>
    <property type="match status" value="1"/>
</dbReference>
<dbReference type="PANTHER" id="PTHR37524:SF2">
    <property type="entry name" value="RIBOSOMAL RNA METHYLTRANSFERASE FTSJ DOMAIN-CONTAINING PROTEIN"/>
    <property type="match status" value="1"/>
</dbReference>
<dbReference type="Pfam" id="PF01728">
    <property type="entry name" value="FtsJ"/>
    <property type="match status" value="1"/>
</dbReference>
<dbReference type="Pfam" id="PF18125">
    <property type="entry name" value="RlmM_FDX"/>
    <property type="match status" value="1"/>
</dbReference>
<dbReference type="Pfam" id="PF21239">
    <property type="entry name" value="RLMM_N"/>
    <property type="match status" value="1"/>
</dbReference>
<dbReference type="PIRSF" id="PIRSF028774">
    <property type="entry name" value="UCP028774"/>
    <property type="match status" value="1"/>
</dbReference>
<dbReference type="SUPFAM" id="SSF53335">
    <property type="entry name" value="S-adenosyl-L-methionine-dependent methyltransferases"/>
    <property type="match status" value="1"/>
</dbReference>